<organism>
    <name type="scientific">Desulfotalea psychrophila (strain LSv54 / DSM 12343)</name>
    <dbReference type="NCBI Taxonomy" id="177439"/>
    <lineage>
        <taxon>Bacteria</taxon>
        <taxon>Pseudomonadati</taxon>
        <taxon>Thermodesulfobacteriota</taxon>
        <taxon>Desulfobulbia</taxon>
        <taxon>Desulfobulbales</taxon>
        <taxon>Desulfocapsaceae</taxon>
        <taxon>Desulfotalea</taxon>
    </lineage>
</organism>
<proteinExistence type="inferred from homology"/>
<gene>
    <name evidence="1" type="primary">psd</name>
    <name type="ordered locus">DP2771</name>
</gene>
<feature type="chain" id="PRO_0000029769" description="Phosphatidylserine decarboxylase beta chain" evidence="1">
    <location>
        <begin position="1"/>
        <end position="182"/>
    </location>
</feature>
<feature type="chain" id="PRO_0000029770" description="Phosphatidylserine decarboxylase alpha chain" evidence="1">
    <location>
        <begin position="183"/>
        <end position="214"/>
    </location>
</feature>
<feature type="active site" description="Schiff-base intermediate with substrate; via pyruvic acid" evidence="1">
    <location>
        <position position="183"/>
    </location>
</feature>
<feature type="site" description="Cleavage (non-hydrolytic); by autocatalysis" evidence="1">
    <location>
        <begin position="182"/>
        <end position="183"/>
    </location>
</feature>
<feature type="modified residue" description="Pyruvic acid (Ser); by autocatalysis" evidence="1">
    <location>
        <position position="183"/>
    </location>
</feature>
<dbReference type="EC" id="4.1.1.65" evidence="1"/>
<dbReference type="EMBL" id="CR522870">
    <property type="protein sequence ID" value="CAG37500.1"/>
    <property type="molecule type" value="Genomic_DNA"/>
</dbReference>
<dbReference type="RefSeq" id="WP_011190012.1">
    <property type="nucleotide sequence ID" value="NC_006138.1"/>
</dbReference>
<dbReference type="SMR" id="Q6AJI0"/>
<dbReference type="STRING" id="177439.DP2771"/>
<dbReference type="KEGG" id="dps:DP2771"/>
<dbReference type="eggNOG" id="COG0688">
    <property type="taxonomic scope" value="Bacteria"/>
</dbReference>
<dbReference type="HOGENOM" id="CLU_072492_0_0_7"/>
<dbReference type="OrthoDB" id="9790893at2"/>
<dbReference type="UniPathway" id="UPA00558">
    <property type="reaction ID" value="UER00616"/>
</dbReference>
<dbReference type="Proteomes" id="UP000000602">
    <property type="component" value="Chromosome"/>
</dbReference>
<dbReference type="GO" id="GO:0005886">
    <property type="term" value="C:plasma membrane"/>
    <property type="evidence" value="ECO:0007669"/>
    <property type="project" value="UniProtKB-SubCell"/>
</dbReference>
<dbReference type="GO" id="GO:0004609">
    <property type="term" value="F:phosphatidylserine decarboxylase activity"/>
    <property type="evidence" value="ECO:0007669"/>
    <property type="project" value="UniProtKB-UniRule"/>
</dbReference>
<dbReference type="GO" id="GO:0006646">
    <property type="term" value="P:phosphatidylethanolamine biosynthetic process"/>
    <property type="evidence" value="ECO:0007669"/>
    <property type="project" value="UniProtKB-UniRule"/>
</dbReference>
<dbReference type="HAMAP" id="MF_00664">
    <property type="entry name" value="PS_decarb_PSD_A"/>
    <property type="match status" value="1"/>
</dbReference>
<dbReference type="InterPro" id="IPR003817">
    <property type="entry name" value="PS_Dcarbxylase"/>
</dbReference>
<dbReference type="InterPro" id="IPR033175">
    <property type="entry name" value="PSD-A"/>
</dbReference>
<dbReference type="NCBIfam" id="NF003678">
    <property type="entry name" value="PRK05305.1-2"/>
    <property type="match status" value="1"/>
</dbReference>
<dbReference type="NCBIfam" id="NF003685">
    <property type="entry name" value="PRK05305.2-5"/>
    <property type="match status" value="1"/>
</dbReference>
<dbReference type="PANTHER" id="PTHR35809">
    <property type="entry name" value="ARCHAETIDYLSERINE DECARBOXYLASE PROENZYME-RELATED"/>
    <property type="match status" value="1"/>
</dbReference>
<dbReference type="PANTHER" id="PTHR35809:SF1">
    <property type="entry name" value="ARCHAETIDYLSERINE DECARBOXYLASE PROENZYME-RELATED"/>
    <property type="match status" value="1"/>
</dbReference>
<dbReference type="Pfam" id="PF02666">
    <property type="entry name" value="PS_Dcarbxylase"/>
    <property type="match status" value="1"/>
</dbReference>
<comment type="function">
    <text evidence="1">Catalyzes the formation of phosphatidylethanolamine (PtdEtn) from phosphatidylserine (PtdSer).</text>
</comment>
<comment type="catalytic activity">
    <reaction evidence="1">
        <text>a 1,2-diacyl-sn-glycero-3-phospho-L-serine + H(+) = a 1,2-diacyl-sn-glycero-3-phosphoethanolamine + CO2</text>
        <dbReference type="Rhea" id="RHEA:20828"/>
        <dbReference type="ChEBI" id="CHEBI:15378"/>
        <dbReference type="ChEBI" id="CHEBI:16526"/>
        <dbReference type="ChEBI" id="CHEBI:57262"/>
        <dbReference type="ChEBI" id="CHEBI:64612"/>
        <dbReference type="EC" id="4.1.1.65"/>
    </reaction>
</comment>
<comment type="cofactor">
    <cofactor evidence="1">
        <name>pyruvate</name>
        <dbReference type="ChEBI" id="CHEBI:15361"/>
    </cofactor>
    <text evidence="1">Binds 1 pyruvoyl group covalently per subunit.</text>
</comment>
<comment type="pathway">
    <text evidence="1">Phospholipid metabolism; phosphatidylethanolamine biosynthesis; phosphatidylethanolamine from CDP-diacylglycerol: step 2/2.</text>
</comment>
<comment type="subunit">
    <text evidence="1">Heterodimer of a large membrane-associated beta subunit and a small pyruvoyl-containing alpha subunit.</text>
</comment>
<comment type="subcellular location">
    <subcellularLocation>
        <location evidence="1">Cell membrane</location>
        <topology evidence="1">Peripheral membrane protein</topology>
    </subcellularLocation>
</comment>
<comment type="PTM">
    <text evidence="1">Is synthesized initially as an inactive proenzyme. Formation of the active enzyme involves a self-maturation process in which the active site pyruvoyl group is generated from an internal serine residue via an autocatalytic post-translational modification. Two non-identical subunits are generated from the proenzyme in this reaction, and the pyruvate is formed at the N-terminus of the alpha chain, which is derived from the carboxyl end of the proenzyme. The post-translation cleavage follows an unusual pathway, termed non-hydrolytic serinolysis, in which the side chain hydroxyl group of the serine supplies its oxygen atom to form the C-terminus of the beta chain, while the remainder of the serine residue undergoes an oxidative deamination to produce ammonia and the pyruvoyl prosthetic group on the alpha chain.</text>
</comment>
<comment type="similarity">
    <text evidence="1">Belongs to the phosphatidylserine decarboxylase family. PSD-A subfamily.</text>
</comment>
<evidence type="ECO:0000255" key="1">
    <source>
        <dbReference type="HAMAP-Rule" id="MF_00664"/>
    </source>
</evidence>
<accession>Q6AJI0</accession>
<reference key="1">
    <citation type="journal article" date="2004" name="Environ. Microbiol.">
        <title>The genome of Desulfotalea psychrophila, a sulfate-reducing bacterium from permanently cold Arctic sediments.</title>
        <authorList>
            <person name="Rabus R."/>
            <person name="Ruepp A."/>
            <person name="Frickey T."/>
            <person name="Rattei T."/>
            <person name="Fartmann B."/>
            <person name="Stark M."/>
            <person name="Bauer M."/>
            <person name="Zibat A."/>
            <person name="Lombardot T."/>
            <person name="Becker I."/>
            <person name="Amann J."/>
            <person name="Gellner K."/>
            <person name="Teeling H."/>
            <person name="Leuschner W.D."/>
            <person name="Gloeckner F.-O."/>
            <person name="Lupas A.N."/>
            <person name="Amann R."/>
            <person name="Klenk H.-P."/>
        </authorList>
    </citation>
    <scope>NUCLEOTIDE SEQUENCE [LARGE SCALE GENOMIC DNA]</scope>
    <source>
        <strain>DSM 12343 / LSv54</strain>
    </source>
</reference>
<name>PSD_DESPS</name>
<sequence length="214" mass="23407">MLQPQVPVAREGVPFIGFAAFLTLVSAASECEILTFIFLLATAFTLYFFRDPERFVPDDPSALISPADGKIIVIEKTDKQDFIEGEALKISIFMNVFNVHVNRAPIAGKVDKIIYTPGKFYSADSSQGAEYNENCGIVLTTNSGKKIAFVQVAGLIARRIVCWLEPNDTIQSGRRVGLIRFGSRVDLYLPTDTALSVSVGDKVRAGETILGQII</sequence>
<keyword id="KW-1003">Cell membrane</keyword>
<keyword id="KW-0210">Decarboxylase</keyword>
<keyword id="KW-0444">Lipid biosynthesis</keyword>
<keyword id="KW-0443">Lipid metabolism</keyword>
<keyword id="KW-0456">Lyase</keyword>
<keyword id="KW-0472">Membrane</keyword>
<keyword id="KW-0594">Phospholipid biosynthesis</keyword>
<keyword id="KW-1208">Phospholipid metabolism</keyword>
<keyword id="KW-0670">Pyruvate</keyword>
<keyword id="KW-1185">Reference proteome</keyword>
<keyword id="KW-0865">Zymogen</keyword>
<protein>
    <recommendedName>
        <fullName evidence="1">Phosphatidylserine decarboxylase proenzyme</fullName>
        <ecNumber evidence="1">4.1.1.65</ecNumber>
    </recommendedName>
    <component>
        <recommendedName>
            <fullName evidence="1">Phosphatidylserine decarboxylase alpha chain</fullName>
        </recommendedName>
    </component>
    <component>
        <recommendedName>
            <fullName evidence="1">Phosphatidylserine decarboxylase beta chain</fullName>
        </recommendedName>
    </component>
</protein>